<reference key="1">
    <citation type="journal article" date="1998" name="Nature">
        <title>Analysis of 1.9 Mb of contiguous sequence from chromosome 4 of Arabidopsis thaliana.</title>
        <authorList>
            <person name="Bevan M."/>
            <person name="Bancroft I."/>
            <person name="Bent E."/>
            <person name="Love K."/>
            <person name="Goodman H.M."/>
            <person name="Dean C."/>
            <person name="Bergkamp R."/>
            <person name="Dirkse W."/>
            <person name="van Staveren M."/>
            <person name="Stiekema W."/>
            <person name="Drost L."/>
            <person name="Ridley P."/>
            <person name="Hudson S.-A."/>
            <person name="Patel K."/>
            <person name="Murphy G."/>
            <person name="Piffanelli P."/>
            <person name="Wedler H."/>
            <person name="Wedler E."/>
            <person name="Wambutt R."/>
            <person name="Weitzenegger T."/>
            <person name="Pohl T."/>
            <person name="Terryn N."/>
            <person name="Gielen J."/>
            <person name="Villarroel R."/>
            <person name="De Clercq R."/>
            <person name="van Montagu M."/>
            <person name="Lecharny A."/>
            <person name="Aubourg S."/>
            <person name="Gy I."/>
            <person name="Kreis M."/>
            <person name="Lao N."/>
            <person name="Kavanagh T."/>
            <person name="Hempel S."/>
            <person name="Kotter P."/>
            <person name="Entian K.-D."/>
            <person name="Rieger M."/>
            <person name="Schaefer M."/>
            <person name="Funk B."/>
            <person name="Mueller-Auer S."/>
            <person name="Silvey M."/>
            <person name="James R."/>
            <person name="Monfort A."/>
            <person name="Pons A."/>
            <person name="Puigdomenech P."/>
            <person name="Douka A."/>
            <person name="Voukelatou E."/>
            <person name="Milioni D."/>
            <person name="Hatzopoulos P."/>
            <person name="Piravandi E."/>
            <person name="Obermaier B."/>
            <person name="Hilbert H."/>
            <person name="Duesterhoeft A."/>
            <person name="Moores T."/>
            <person name="Jones J.D.G."/>
            <person name="Eneva T."/>
            <person name="Palme K."/>
            <person name="Benes V."/>
            <person name="Rechmann S."/>
            <person name="Ansorge W."/>
            <person name="Cooke R."/>
            <person name="Berger C."/>
            <person name="Delseny M."/>
            <person name="Voet M."/>
            <person name="Volckaert G."/>
            <person name="Mewes H.-W."/>
            <person name="Klosterman S."/>
            <person name="Schueller C."/>
            <person name="Chalwatzis N."/>
        </authorList>
    </citation>
    <scope>NUCLEOTIDE SEQUENCE [LARGE SCALE GENOMIC DNA]</scope>
    <source>
        <strain>cv. Columbia</strain>
    </source>
</reference>
<reference key="2">
    <citation type="journal article" date="1999" name="Nature">
        <title>Sequence and analysis of chromosome 4 of the plant Arabidopsis thaliana.</title>
        <authorList>
            <person name="Mayer K.F.X."/>
            <person name="Schueller C."/>
            <person name="Wambutt R."/>
            <person name="Murphy G."/>
            <person name="Volckaert G."/>
            <person name="Pohl T."/>
            <person name="Duesterhoeft A."/>
            <person name="Stiekema W."/>
            <person name="Entian K.-D."/>
            <person name="Terryn N."/>
            <person name="Harris B."/>
            <person name="Ansorge W."/>
            <person name="Brandt P."/>
            <person name="Grivell L.A."/>
            <person name="Rieger M."/>
            <person name="Weichselgartner M."/>
            <person name="de Simone V."/>
            <person name="Obermaier B."/>
            <person name="Mache R."/>
            <person name="Mueller M."/>
            <person name="Kreis M."/>
            <person name="Delseny M."/>
            <person name="Puigdomenech P."/>
            <person name="Watson M."/>
            <person name="Schmidtheini T."/>
            <person name="Reichert B."/>
            <person name="Portetelle D."/>
            <person name="Perez-Alonso M."/>
            <person name="Boutry M."/>
            <person name="Bancroft I."/>
            <person name="Vos P."/>
            <person name="Hoheisel J."/>
            <person name="Zimmermann W."/>
            <person name="Wedler H."/>
            <person name="Ridley P."/>
            <person name="Langham S.-A."/>
            <person name="McCullagh B."/>
            <person name="Bilham L."/>
            <person name="Robben J."/>
            <person name="van der Schueren J."/>
            <person name="Grymonprez B."/>
            <person name="Chuang Y.-J."/>
            <person name="Vandenbussche F."/>
            <person name="Braeken M."/>
            <person name="Weltjens I."/>
            <person name="Voet M."/>
            <person name="Bastiaens I."/>
            <person name="Aert R."/>
            <person name="Defoor E."/>
            <person name="Weitzenegger T."/>
            <person name="Bothe G."/>
            <person name="Ramsperger U."/>
            <person name="Hilbert H."/>
            <person name="Braun M."/>
            <person name="Holzer E."/>
            <person name="Brandt A."/>
            <person name="Peters S."/>
            <person name="van Staveren M."/>
            <person name="Dirkse W."/>
            <person name="Mooijman P."/>
            <person name="Klein Lankhorst R."/>
            <person name="Rose M."/>
            <person name="Hauf J."/>
            <person name="Koetter P."/>
            <person name="Berneiser S."/>
            <person name="Hempel S."/>
            <person name="Feldpausch M."/>
            <person name="Lamberth S."/>
            <person name="Van den Daele H."/>
            <person name="De Keyser A."/>
            <person name="Buysshaert C."/>
            <person name="Gielen J."/>
            <person name="Villarroel R."/>
            <person name="De Clercq R."/>
            <person name="van Montagu M."/>
            <person name="Rogers J."/>
            <person name="Cronin A."/>
            <person name="Quail M.A."/>
            <person name="Bray-Allen S."/>
            <person name="Clark L."/>
            <person name="Doggett J."/>
            <person name="Hall S."/>
            <person name="Kay M."/>
            <person name="Lennard N."/>
            <person name="McLay K."/>
            <person name="Mayes R."/>
            <person name="Pettett A."/>
            <person name="Rajandream M.A."/>
            <person name="Lyne M."/>
            <person name="Benes V."/>
            <person name="Rechmann S."/>
            <person name="Borkova D."/>
            <person name="Bloecker H."/>
            <person name="Scharfe M."/>
            <person name="Grimm M."/>
            <person name="Loehnert T.-H."/>
            <person name="Dose S."/>
            <person name="de Haan M."/>
            <person name="Maarse A.C."/>
            <person name="Schaefer M."/>
            <person name="Mueller-Auer S."/>
            <person name="Gabel C."/>
            <person name="Fuchs M."/>
            <person name="Fartmann B."/>
            <person name="Granderath K."/>
            <person name="Dauner D."/>
            <person name="Herzl A."/>
            <person name="Neumann S."/>
            <person name="Argiriou A."/>
            <person name="Vitale D."/>
            <person name="Liguori R."/>
            <person name="Piravandi E."/>
            <person name="Massenet O."/>
            <person name="Quigley F."/>
            <person name="Clabauld G."/>
            <person name="Muendlein A."/>
            <person name="Felber R."/>
            <person name="Schnabl S."/>
            <person name="Hiller R."/>
            <person name="Schmidt W."/>
            <person name="Lecharny A."/>
            <person name="Aubourg S."/>
            <person name="Chefdor F."/>
            <person name="Cooke R."/>
            <person name="Berger C."/>
            <person name="Monfort A."/>
            <person name="Casacuberta E."/>
            <person name="Gibbons T."/>
            <person name="Weber N."/>
            <person name="Vandenbol M."/>
            <person name="Bargues M."/>
            <person name="Terol J."/>
            <person name="Torres A."/>
            <person name="Perez-Perez A."/>
            <person name="Purnelle B."/>
            <person name="Bent E."/>
            <person name="Johnson S."/>
            <person name="Tacon D."/>
            <person name="Jesse T."/>
            <person name="Heijnen L."/>
            <person name="Schwarz S."/>
            <person name="Scholler P."/>
            <person name="Heber S."/>
            <person name="Francs P."/>
            <person name="Bielke C."/>
            <person name="Frishman D."/>
            <person name="Haase D."/>
            <person name="Lemcke K."/>
            <person name="Mewes H.-W."/>
            <person name="Stocker S."/>
            <person name="Zaccaria P."/>
            <person name="Bevan M."/>
            <person name="Wilson R.K."/>
            <person name="de la Bastide M."/>
            <person name="Habermann K."/>
            <person name="Parnell L."/>
            <person name="Dedhia N."/>
            <person name="Gnoj L."/>
            <person name="Schutz K."/>
            <person name="Huang E."/>
            <person name="Spiegel L."/>
            <person name="Sekhon M."/>
            <person name="Murray J."/>
            <person name="Sheet P."/>
            <person name="Cordes M."/>
            <person name="Abu-Threideh J."/>
            <person name="Stoneking T."/>
            <person name="Kalicki J."/>
            <person name="Graves T."/>
            <person name="Harmon G."/>
            <person name="Edwards J."/>
            <person name="Latreille P."/>
            <person name="Courtney L."/>
            <person name="Cloud J."/>
            <person name="Abbott A."/>
            <person name="Scott K."/>
            <person name="Johnson D."/>
            <person name="Minx P."/>
            <person name="Bentley D."/>
            <person name="Fulton B."/>
            <person name="Miller N."/>
            <person name="Greco T."/>
            <person name="Kemp K."/>
            <person name="Kramer J."/>
            <person name="Fulton L."/>
            <person name="Mardis E."/>
            <person name="Dante M."/>
            <person name="Pepin K."/>
            <person name="Hillier L.W."/>
            <person name="Nelson J."/>
            <person name="Spieth J."/>
            <person name="Ryan E."/>
            <person name="Andrews S."/>
            <person name="Geisel C."/>
            <person name="Layman D."/>
            <person name="Du H."/>
            <person name="Ali J."/>
            <person name="Berghoff A."/>
            <person name="Jones K."/>
            <person name="Drone K."/>
            <person name="Cotton M."/>
            <person name="Joshu C."/>
            <person name="Antonoiu B."/>
            <person name="Zidanic M."/>
            <person name="Strong C."/>
            <person name="Sun H."/>
            <person name="Lamar B."/>
            <person name="Yordan C."/>
            <person name="Ma P."/>
            <person name="Zhong J."/>
            <person name="Preston R."/>
            <person name="Vil D."/>
            <person name="Shekher M."/>
            <person name="Matero A."/>
            <person name="Shah R."/>
            <person name="Swaby I.K."/>
            <person name="O'Shaughnessy A."/>
            <person name="Rodriguez M."/>
            <person name="Hoffman J."/>
            <person name="Till S."/>
            <person name="Granat S."/>
            <person name="Shohdy N."/>
            <person name="Hasegawa A."/>
            <person name="Hameed A."/>
            <person name="Lodhi M."/>
            <person name="Johnson A."/>
            <person name="Chen E."/>
            <person name="Marra M.A."/>
            <person name="Martienssen R."/>
            <person name="McCombie W.R."/>
        </authorList>
    </citation>
    <scope>NUCLEOTIDE SEQUENCE [LARGE SCALE GENOMIC DNA]</scope>
    <source>
        <strain>cv. Columbia</strain>
    </source>
</reference>
<reference key="3">
    <citation type="journal article" date="2017" name="Plant J.">
        <title>Araport11: a complete reannotation of the Arabidopsis thaliana reference genome.</title>
        <authorList>
            <person name="Cheng C.Y."/>
            <person name="Krishnakumar V."/>
            <person name="Chan A.P."/>
            <person name="Thibaud-Nissen F."/>
            <person name="Schobel S."/>
            <person name="Town C.D."/>
        </authorList>
    </citation>
    <scope>GENOME REANNOTATION</scope>
    <scope>SEQUENCE REVISION</scope>
    <source>
        <strain>cv. Columbia</strain>
    </source>
</reference>
<reference key="4">
    <citation type="submission" date="2004-07" db="EMBL/GenBank/DDBJ databases">
        <title>Arabidopsis ORF clones.</title>
        <authorList>
            <person name="Shinn P."/>
            <person name="Chen H."/>
            <person name="Cheuk R.F."/>
            <person name="Kim C.J."/>
            <person name="Ecker J.R."/>
        </authorList>
    </citation>
    <scope>NUCLEOTIDE SEQUENCE [LARGE SCALE MRNA]</scope>
    <source>
        <strain>cv. Columbia</strain>
    </source>
</reference>
<reference key="5">
    <citation type="journal article" date="2000" name="Plant Physiol.">
        <title>The Arabidopsis genome. An abundance of soluble N-ethylmaleimide-sensitive factor adaptor protein receptors.</title>
        <authorList>
            <person name="Sanderfoot A.A."/>
            <person name="Assaad F.F."/>
            <person name="Raikhel N.V."/>
        </authorList>
    </citation>
    <scope>GENE FAMILY</scope>
    <scope>NOMENCLATURE</scope>
</reference>
<reference key="6">
    <citation type="journal article" date="2004" name="Cell Struct. Funct.">
        <title>Systematic analysis of SNARE molecules in Arabidopsis: dissection of the post-Golgi network in plant cells.</title>
        <authorList>
            <person name="Uemura T."/>
            <person name="Ueda T."/>
            <person name="Ohniwa R.L."/>
            <person name="Nakano A."/>
            <person name="Takeyasu K."/>
            <person name="Sato M.H."/>
        </authorList>
    </citation>
    <scope>TISSUE SPECIFICITY</scope>
    <scope>SUBCELLULAR LOCATION</scope>
</reference>
<sequence>MGQESFIYSFVARGTMILAEYTEFTGNFPSIAAQCLQKLPSSSNSKFTYNCDHHTFNFLVEDGYAYCVVAKDSLSKQISIAFLERVKADFKKRYGGGKASTAIAKSLNKEFGPVMKEHMNYIVDHAEEIEKLIKVKAQVSEVKSIMLENIDKAIDRGENLTVLTDKTENLRSQAQEYKKQGTQVRRKLWYQNMKIKLVVLGILLLLVLIIWISVCHGFNCTD</sequence>
<gene>
    <name evidence="6" type="primary">VAMP724</name>
    <name evidence="10" type="ordered locus">At4g15780</name>
    <name evidence="11" type="ORF">dl3930c</name>
    <name evidence="12" type="ORF">FCAALL.378</name>
</gene>
<comment type="function">
    <text evidence="9">Involved in the targeting and/or fusion of transport vesicles to their target membrane.</text>
</comment>
<comment type="subcellular location">
    <subcellularLocation>
        <location evidence="5">Cell membrane</location>
        <topology evidence="1">Single-pass type IV membrane protein</topology>
    </subcellularLocation>
    <subcellularLocation>
        <location evidence="5">Early endosome membrane</location>
        <topology evidence="1">Single-pass type IV membrane protein</topology>
    </subcellularLocation>
</comment>
<comment type="tissue specificity">
    <text evidence="5">Expressed in flowers, leaves, stems and roots.</text>
</comment>
<comment type="similarity">
    <text evidence="8">Belongs to the synaptobrevin family.</text>
</comment>
<comment type="sequence caution" evidence="8">
    <conflict type="erroneous gene model prediction">
        <sequence resource="EMBL-CDS" id="CAB10356"/>
    </conflict>
</comment>
<comment type="sequence caution" evidence="8">
    <conflict type="erroneous gene model prediction">
        <sequence resource="EMBL-CDS" id="CAB78620"/>
    </conflict>
</comment>
<proteinExistence type="evidence at transcript level"/>
<dbReference type="EMBL" id="Z97339">
    <property type="protein sequence ID" value="CAB10356.1"/>
    <property type="status" value="ALT_SEQ"/>
    <property type="molecule type" value="Genomic_DNA"/>
</dbReference>
<dbReference type="EMBL" id="AL161542">
    <property type="protein sequence ID" value="CAB78620.1"/>
    <property type="status" value="ALT_SEQ"/>
    <property type="molecule type" value="Genomic_DNA"/>
</dbReference>
<dbReference type="EMBL" id="CP002687">
    <property type="status" value="NOT_ANNOTATED_CDS"/>
    <property type="molecule type" value="Genomic_DNA"/>
</dbReference>
<dbReference type="EMBL" id="BT014777">
    <property type="protein sequence ID" value="AAT41760.1"/>
    <property type="molecule type" value="mRNA"/>
</dbReference>
<dbReference type="EMBL" id="BT015012">
    <property type="protein sequence ID" value="AAT70463.1"/>
    <property type="molecule type" value="mRNA"/>
</dbReference>
<dbReference type="SMR" id="O23429"/>
<dbReference type="BioGRID" id="12552">
    <property type="interactions" value="3"/>
</dbReference>
<dbReference type="FunCoup" id="O23429">
    <property type="interactions" value="2"/>
</dbReference>
<dbReference type="STRING" id="3702.O23429"/>
<dbReference type="PaxDb" id="3702-AT4G15780.1"/>
<dbReference type="PeptideAtlas" id="O23429"/>
<dbReference type="ProteomicsDB" id="242307"/>
<dbReference type="Araport" id="AT4G15780"/>
<dbReference type="TAIR" id="AT4G15780">
    <property type="gene designation" value="VAMP724"/>
</dbReference>
<dbReference type="eggNOG" id="KOG0859">
    <property type="taxonomic scope" value="Eukaryota"/>
</dbReference>
<dbReference type="HOGENOM" id="CLU_064620_1_0_1"/>
<dbReference type="InParanoid" id="O23429"/>
<dbReference type="OrthoDB" id="248747at2759"/>
<dbReference type="PhylomeDB" id="O23429"/>
<dbReference type="PRO" id="PR:O23429"/>
<dbReference type="Proteomes" id="UP000006548">
    <property type="component" value="Chromosome 4"/>
</dbReference>
<dbReference type="ExpressionAtlas" id="O23429">
    <property type="expression patterns" value="baseline and differential"/>
</dbReference>
<dbReference type="GO" id="GO:0031901">
    <property type="term" value="C:early endosome membrane"/>
    <property type="evidence" value="ECO:0007669"/>
    <property type="project" value="UniProtKB-SubCell"/>
</dbReference>
<dbReference type="GO" id="GO:0005886">
    <property type="term" value="C:plasma membrane"/>
    <property type="evidence" value="ECO:0007669"/>
    <property type="project" value="UniProtKB-SubCell"/>
</dbReference>
<dbReference type="GO" id="GO:0015031">
    <property type="term" value="P:protein transport"/>
    <property type="evidence" value="ECO:0007669"/>
    <property type="project" value="UniProtKB-KW"/>
</dbReference>
<dbReference type="GO" id="GO:0016192">
    <property type="term" value="P:vesicle-mediated transport"/>
    <property type="evidence" value="ECO:0007669"/>
    <property type="project" value="InterPro"/>
</dbReference>
<dbReference type="CDD" id="cd14824">
    <property type="entry name" value="Longin"/>
    <property type="match status" value="1"/>
</dbReference>
<dbReference type="CDD" id="cd15843">
    <property type="entry name" value="R-SNARE"/>
    <property type="match status" value="1"/>
</dbReference>
<dbReference type="FunFam" id="3.30.450.50:FF:000009">
    <property type="entry name" value="Vesicle-associated membrane protein 724"/>
    <property type="match status" value="1"/>
</dbReference>
<dbReference type="FunFam" id="1.20.5.110:FF:000010">
    <property type="entry name" value="Vesicle-associated membrane protein 726"/>
    <property type="match status" value="1"/>
</dbReference>
<dbReference type="Gene3D" id="1.20.5.110">
    <property type="match status" value="1"/>
</dbReference>
<dbReference type="Gene3D" id="3.30.450.50">
    <property type="entry name" value="Longin domain"/>
    <property type="match status" value="1"/>
</dbReference>
<dbReference type="InterPro" id="IPR011012">
    <property type="entry name" value="Longin-like_dom_sf"/>
</dbReference>
<dbReference type="InterPro" id="IPR010908">
    <property type="entry name" value="Longin_dom"/>
</dbReference>
<dbReference type="InterPro" id="IPR001388">
    <property type="entry name" value="Synaptobrevin-like"/>
</dbReference>
<dbReference type="InterPro" id="IPR051097">
    <property type="entry name" value="Synaptobrevin-like_transport"/>
</dbReference>
<dbReference type="InterPro" id="IPR042855">
    <property type="entry name" value="V_SNARE_CC"/>
</dbReference>
<dbReference type="PANTHER" id="PTHR21136">
    <property type="entry name" value="SNARE PROTEINS"/>
    <property type="match status" value="1"/>
</dbReference>
<dbReference type="PANTHER" id="PTHR21136:SF72">
    <property type="entry name" value="VESICLE-ASSOCIATED MEMBRANE PROTEIN 724"/>
    <property type="match status" value="1"/>
</dbReference>
<dbReference type="Pfam" id="PF13774">
    <property type="entry name" value="Longin"/>
    <property type="match status" value="1"/>
</dbReference>
<dbReference type="Pfam" id="PF00957">
    <property type="entry name" value="Synaptobrevin"/>
    <property type="match status" value="1"/>
</dbReference>
<dbReference type="PRINTS" id="PR00219">
    <property type="entry name" value="SYNAPTOBREVN"/>
</dbReference>
<dbReference type="SMART" id="SM01270">
    <property type="entry name" value="Longin"/>
    <property type="match status" value="1"/>
</dbReference>
<dbReference type="SUPFAM" id="SSF58038">
    <property type="entry name" value="SNARE fusion complex"/>
    <property type="match status" value="1"/>
</dbReference>
<dbReference type="SUPFAM" id="SSF64356">
    <property type="entry name" value="SNARE-like"/>
    <property type="match status" value="1"/>
</dbReference>
<dbReference type="PROSITE" id="PS50859">
    <property type="entry name" value="LONGIN"/>
    <property type="match status" value="1"/>
</dbReference>
<dbReference type="PROSITE" id="PS00417">
    <property type="entry name" value="SYNAPTOBREVIN"/>
    <property type="match status" value="1"/>
</dbReference>
<dbReference type="PROSITE" id="PS50892">
    <property type="entry name" value="V_SNARE"/>
    <property type="match status" value="1"/>
</dbReference>
<protein>
    <recommendedName>
        <fullName evidence="6">Vesicle-associated membrane protein 724</fullName>
        <shortName evidence="6">AtVAMP724</shortName>
    </recommendedName>
    <alternativeName>
        <fullName evidence="7">SYBL1-like protein</fullName>
    </alternativeName>
</protein>
<name>VA724_ARATH</name>
<keyword id="KW-1003">Cell membrane</keyword>
<keyword id="KW-0175">Coiled coil</keyword>
<keyword id="KW-0967">Endosome</keyword>
<keyword id="KW-0472">Membrane</keyword>
<keyword id="KW-0653">Protein transport</keyword>
<keyword id="KW-1185">Reference proteome</keyword>
<keyword id="KW-0812">Transmembrane</keyword>
<keyword id="KW-1133">Transmembrane helix</keyword>
<keyword id="KW-0813">Transport</keyword>
<accession>O23429</accession>
<accession>F4JKW3</accession>
<accession>Q6ID96</accession>
<organism>
    <name type="scientific">Arabidopsis thaliana</name>
    <name type="common">Mouse-ear cress</name>
    <dbReference type="NCBI Taxonomy" id="3702"/>
    <lineage>
        <taxon>Eukaryota</taxon>
        <taxon>Viridiplantae</taxon>
        <taxon>Streptophyta</taxon>
        <taxon>Embryophyta</taxon>
        <taxon>Tracheophyta</taxon>
        <taxon>Spermatophyta</taxon>
        <taxon>Magnoliopsida</taxon>
        <taxon>eudicotyledons</taxon>
        <taxon>Gunneridae</taxon>
        <taxon>Pentapetalae</taxon>
        <taxon>rosids</taxon>
        <taxon>malvids</taxon>
        <taxon>Brassicales</taxon>
        <taxon>Brassicaceae</taxon>
        <taxon>Camelineae</taxon>
        <taxon>Arabidopsis</taxon>
    </lineage>
</organism>
<feature type="chain" id="PRO_0000206757" description="Vesicle-associated membrane protein 724">
    <location>
        <begin position="1"/>
        <end position="222"/>
    </location>
</feature>
<feature type="topological domain" description="Cytoplasmic" evidence="2">
    <location>
        <begin position="1"/>
        <end position="197"/>
    </location>
</feature>
<feature type="transmembrane region" description="Helical; Anchor for type IV membrane protein" evidence="2">
    <location>
        <begin position="198"/>
        <end position="218"/>
    </location>
</feature>
<feature type="topological domain" description="Vesicular" evidence="2">
    <location>
        <begin position="219"/>
        <end position="222"/>
    </location>
</feature>
<feature type="domain" description="Longin" evidence="3">
    <location>
        <begin position="10"/>
        <end position="115"/>
    </location>
</feature>
<feature type="domain" description="v-SNARE coiled-coil homology" evidence="4">
    <location>
        <begin position="131"/>
        <end position="191"/>
    </location>
</feature>
<evidence type="ECO:0000250" key="1">
    <source>
        <dbReference type="UniProtKB" id="Q12255"/>
    </source>
</evidence>
<evidence type="ECO:0000255" key="2"/>
<evidence type="ECO:0000255" key="3">
    <source>
        <dbReference type="PROSITE-ProRule" id="PRU00231"/>
    </source>
</evidence>
<evidence type="ECO:0000255" key="4">
    <source>
        <dbReference type="PROSITE-ProRule" id="PRU00290"/>
    </source>
</evidence>
<evidence type="ECO:0000269" key="5">
    <source>
    </source>
</evidence>
<evidence type="ECO:0000303" key="6">
    <source>
    </source>
</evidence>
<evidence type="ECO:0000303" key="7">
    <source>
    </source>
</evidence>
<evidence type="ECO:0000305" key="8"/>
<evidence type="ECO:0000305" key="9">
    <source>
    </source>
</evidence>
<evidence type="ECO:0000312" key="10">
    <source>
        <dbReference type="Araport" id="AT4G15780"/>
    </source>
</evidence>
<evidence type="ECO:0000312" key="11">
    <source>
        <dbReference type="EMBL" id="CAB10356.1"/>
    </source>
</evidence>
<evidence type="ECO:0000312" key="12">
    <source>
        <dbReference type="EMBL" id="CAB78620.1"/>
    </source>
</evidence>